<reference evidence="8" key="1">
    <citation type="journal article" date="2013" name="Nature">
        <title>The zebrafish reference genome sequence and its relationship to the human genome.</title>
        <authorList>
            <person name="Howe K."/>
            <person name="Clark M.D."/>
            <person name="Torroja C.F."/>
            <person name="Torrance J."/>
            <person name="Berthelot C."/>
            <person name="Muffato M."/>
            <person name="Collins J.E."/>
            <person name="Humphray S."/>
            <person name="McLaren K."/>
            <person name="Matthews L."/>
            <person name="McLaren S."/>
            <person name="Sealy I."/>
            <person name="Caccamo M."/>
            <person name="Churcher C."/>
            <person name="Scott C."/>
            <person name="Barrett J.C."/>
            <person name="Koch R."/>
            <person name="Rauch G.J."/>
            <person name="White S."/>
            <person name="Chow W."/>
            <person name="Kilian B."/>
            <person name="Quintais L.T."/>
            <person name="Guerra-Assuncao J.A."/>
            <person name="Zhou Y."/>
            <person name="Gu Y."/>
            <person name="Yen J."/>
            <person name="Vogel J.H."/>
            <person name="Eyre T."/>
            <person name="Redmond S."/>
            <person name="Banerjee R."/>
            <person name="Chi J."/>
            <person name="Fu B."/>
            <person name="Langley E."/>
            <person name="Maguire S.F."/>
            <person name="Laird G.K."/>
            <person name="Lloyd D."/>
            <person name="Kenyon E."/>
            <person name="Donaldson S."/>
            <person name="Sehra H."/>
            <person name="Almeida-King J."/>
            <person name="Loveland J."/>
            <person name="Trevanion S."/>
            <person name="Jones M."/>
            <person name="Quail M."/>
            <person name="Willey D."/>
            <person name="Hunt A."/>
            <person name="Burton J."/>
            <person name="Sims S."/>
            <person name="McLay K."/>
            <person name="Plumb B."/>
            <person name="Davis J."/>
            <person name="Clee C."/>
            <person name="Oliver K."/>
            <person name="Clark R."/>
            <person name="Riddle C."/>
            <person name="Elliot D."/>
            <person name="Threadgold G."/>
            <person name="Harden G."/>
            <person name="Ware D."/>
            <person name="Begum S."/>
            <person name="Mortimore B."/>
            <person name="Kerry G."/>
            <person name="Heath P."/>
            <person name="Phillimore B."/>
            <person name="Tracey A."/>
            <person name="Corby N."/>
            <person name="Dunn M."/>
            <person name="Johnson C."/>
            <person name="Wood J."/>
            <person name="Clark S."/>
            <person name="Pelan S."/>
            <person name="Griffiths G."/>
            <person name="Smith M."/>
            <person name="Glithero R."/>
            <person name="Howden P."/>
            <person name="Barker N."/>
            <person name="Lloyd C."/>
            <person name="Stevens C."/>
            <person name="Harley J."/>
            <person name="Holt K."/>
            <person name="Panagiotidis G."/>
            <person name="Lovell J."/>
            <person name="Beasley H."/>
            <person name="Henderson C."/>
            <person name="Gordon D."/>
            <person name="Auger K."/>
            <person name="Wright D."/>
            <person name="Collins J."/>
            <person name="Raisen C."/>
            <person name="Dyer L."/>
            <person name="Leung K."/>
            <person name="Robertson L."/>
            <person name="Ambridge K."/>
            <person name="Leongamornlert D."/>
            <person name="McGuire S."/>
            <person name="Gilderthorp R."/>
            <person name="Griffiths C."/>
            <person name="Manthravadi D."/>
            <person name="Nichol S."/>
            <person name="Barker G."/>
            <person name="Whitehead S."/>
            <person name="Kay M."/>
            <person name="Brown J."/>
            <person name="Murnane C."/>
            <person name="Gray E."/>
            <person name="Humphries M."/>
            <person name="Sycamore N."/>
            <person name="Barker D."/>
            <person name="Saunders D."/>
            <person name="Wallis J."/>
            <person name="Babbage A."/>
            <person name="Hammond S."/>
            <person name="Mashreghi-Mohammadi M."/>
            <person name="Barr L."/>
            <person name="Martin S."/>
            <person name="Wray P."/>
            <person name="Ellington A."/>
            <person name="Matthews N."/>
            <person name="Ellwood M."/>
            <person name="Woodmansey R."/>
            <person name="Clark G."/>
            <person name="Cooper J."/>
            <person name="Tromans A."/>
            <person name="Grafham D."/>
            <person name="Skuce C."/>
            <person name="Pandian R."/>
            <person name="Andrews R."/>
            <person name="Harrison E."/>
            <person name="Kimberley A."/>
            <person name="Garnett J."/>
            <person name="Fosker N."/>
            <person name="Hall R."/>
            <person name="Garner P."/>
            <person name="Kelly D."/>
            <person name="Bird C."/>
            <person name="Palmer S."/>
            <person name="Gehring I."/>
            <person name="Berger A."/>
            <person name="Dooley C.M."/>
            <person name="Ersan-Urun Z."/>
            <person name="Eser C."/>
            <person name="Geiger H."/>
            <person name="Geisler M."/>
            <person name="Karotki L."/>
            <person name="Kirn A."/>
            <person name="Konantz J."/>
            <person name="Konantz M."/>
            <person name="Oberlander M."/>
            <person name="Rudolph-Geiger S."/>
            <person name="Teucke M."/>
            <person name="Lanz C."/>
            <person name="Raddatz G."/>
            <person name="Osoegawa K."/>
            <person name="Zhu B."/>
            <person name="Rapp A."/>
            <person name="Widaa S."/>
            <person name="Langford C."/>
            <person name="Yang F."/>
            <person name="Schuster S.C."/>
            <person name="Carter N.P."/>
            <person name="Harrow J."/>
            <person name="Ning Z."/>
            <person name="Herrero J."/>
            <person name="Searle S.M."/>
            <person name="Enright A."/>
            <person name="Geisler R."/>
            <person name="Plasterk R.H."/>
            <person name="Lee C."/>
            <person name="Westerfield M."/>
            <person name="de Jong P.J."/>
            <person name="Zon L.I."/>
            <person name="Postlethwait J.H."/>
            <person name="Nusslein-Volhard C."/>
            <person name="Hubbard T.J."/>
            <person name="Roest Crollius H."/>
            <person name="Rogers J."/>
            <person name="Stemple D.L."/>
        </authorList>
    </citation>
    <scope>NUCLEOTIDE SEQUENCE [LARGE SCALE GENOMIC DNA]</scope>
    <source>
        <strain evidence="8">Tuebingen</strain>
    </source>
</reference>
<reference key="2">
    <citation type="journal article" date="2002" name="Proc. Natl. Acad. Sci. U.S.A.">
        <title>Generation and initial analysis of more than 15,000 full-length human and mouse cDNA sequences.</title>
        <authorList>
            <consortium name="Mammalian Gene Collection Program Team"/>
            <person name="Strausberg R.L."/>
            <person name="Feingold E.A."/>
            <person name="Grouse L.H."/>
            <person name="Derge J.G."/>
            <person name="Klausner R.D."/>
            <person name="Collins F.S."/>
            <person name="Wagner L."/>
            <person name="Shenmen C.M."/>
            <person name="Schuler G.D."/>
            <person name="Altschul S.F."/>
            <person name="Zeeberg B."/>
            <person name="Buetow K.H."/>
            <person name="Schaefer C.F."/>
            <person name="Bhat N.K."/>
            <person name="Hopkins R.F."/>
            <person name="Jordan H."/>
            <person name="Moore T."/>
            <person name="Max S.I."/>
            <person name="Wang J."/>
            <person name="Hsieh F."/>
            <person name="Diatchenko L."/>
            <person name="Marusina K."/>
            <person name="Farmer A.A."/>
            <person name="Rubin G.M."/>
            <person name="Hong L."/>
            <person name="Stapleton M."/>
            <person name="Soares M.B."/>
            <person name="Bonaldo M.F."/>
            <person name="Casavant T.L."/>
            <person name="Scheetz T.E."/>
            <person name="Brownstein M.J."/>
            <person name="Usdin T.B."/>
            <person name="Toshiyuki S."/>
            <person name="Carninci P."/>
            <person name="Prange C."/>
            <person name="Raha S.S."/>
            <person name="Loquellano N.A."/>
            <person name="Peters G.J."/>
            <person name="Abramson R.D."/>
            <person name="Mullahy S.J."/>
            <person name="Bosak S.A."/>
            <person name="McEwan P.J."/>
            <person name="McKernan K.J."/>
            <person name="Malek J.A."/>
            <person name="Gunaratne P.H."/>
            <person name="Richards S."/>
            <person name="Worley K.C."/>
            <person name="Hale S."/>
            <person name="Garcia A.M."/>
            <person name="Gay L.J."/>
            <person name="Hulyk S.W."/>
            <person name="Villalon D.K."/>
            <person name="Muzny D.M."/>
            <person name="Sodergren E.J."/>
            <person name="Lu X."/>
            <person name="Gibbs R.A."/>
            <person name="Fahey J."/>
            <person name="Helton E."/>
            <person name="Ketteman M."/>
            <person name="Madan A."/>
            <person name="Rodrigues S."/>
            <person name="Sanchez A."/>
            <person name="Whiting M."/>
            <person name="Madan A."/>
            <person name="Young A.C."/>
            <person name="Shevchenko Y."/>
            <person name="Bouffard G.G."/>
            <person name="Blakesley R.W."/>
            <person name="Touchman J.W."/>
            <person name="Green E.D."/>
            <person name="Dickson M.C."/>
            <person name="Rodriguez A.C."/>
            <person name="Grimwood J."/>
            <person name="Schmutz J."/>
            <person name="Myers R.M."/>
            <person name="Butterfield Y.S."/>
            <person name="Krzywinski M.I."/>
            <person name="Skalska U."/>
            <person name="Smailus D.E."/>
            <person name="Schnerch A."/>
            <person name="Schein J.E."/>
            <person name="Jones S.J."/>
            <person name="Marra M.A."/>
        </authorList>
    </citation>
    <scope>NUCLEOTIDE SEQUENCE [LARGE SCALE MRNA] (ISOFORM 2)</scope>
</reference>
<reference evidence="7" key="3">
    <citation type="submission" date="2004-03" db="EMBL/GenBank/DDBJ databases">
        <authorList>
            <consortium name="NIH - Zebrafish Gene Collection (ZGC) project"/>
        </authorList>
    </citation>
    <scope>NUCLEOTIDE SEQUENCE [LARGE SCALE MRNA] (ISOFORM 2)</scope>
    <source>
        <tissue evidence="7">Kidney</tissue>
    </source>
</reference>
<reference evidence="6" key="4">
    <citation type="journal article" date="2015" name="Mol. Cell">
        <title>Higher-order assembly of BRCC36-KIAA0157 is required for DUB activity and biological function.</title>
        <authorList>
            <person name="Zeqiraj E."/>
            <person name="Tian L."/>
            <person name="Piggott C.A."/>
            <person name="Pillon M.C."/>
            <person name="Duffy N.M."/>
            <person name="Ceccarelli D.F."/>
            <person name="Keszei A.F."/>
            <person name="Lorenzen K."/>
            <person name="Kurinov I."/>
            <person name="Orlicky S."/>
            <person name="Gish G.D."/>
            <person name="Heck A.J."/>
            <person name="Guarne A."/>
            <person name="Greenberg R.A."/>
            <person name="Sicheri F."/>
        </authorList>
    </citation>
    <scope>IDENTIFICATION IN THE BRISC COMPLEX</scope>
    <scope>INTERACTION WITH BRCC3</scope>
</reference>
<name>ABRX2_DANRE</name>
<evidence type="ECO:0000250" key="1">
    <source>
        <dbReference type="UniProtKB" id="Q15018"/>
    </source>
</evidence>
<evidence type="ECO:0000255" key="2"/>
<evidence type="ECO:0000255" key="3">
    <source>
        <dbReference type="PROSITE-ProRule" id="PRU01182"/>
    </source>
</evidence>
<evidence type="ECO:0000256" key="4">
    <source>
        <dbReference type="SAM" id="MobiDB-lite"/>
    </source>
</evidence>
<evidence type="ECO:0000269" key="5">
    <source>
    </source>
</evidence>
<evidence type="ECO:0000305" key="6"/>
<evidence type="ECO:0000312" key="7">
    <source>
        <dbReference type="EMBL" id="AAH67636.1"/>
    </source>
</evidence>
<evidence type="ECO:0000312" key="8">
    <source>
        <dbReference type="Proteomes" id="UP000000437"/>
    </source>
</evidence>
<evidence type="ECO:0000312" key="9">
    <source>
        <dbReference type="ZFIN" id="ZDB-GENE-040426-2491"/>
    </source>
</evidence>
<gene>
    <name evidence="9" type="primary">abraxas2</name>
    <name evidence="9" type="synonym">abraxas2b</name>
    <name type="synonym">fam175b</name>
    <name type="synonym">wu:fi33f11</name>
    <name type="synonym">zgc:85800</name>
</gene>
<keyword id="KW-0025">Alternative splicing</keyword>
<keyword id="KW-0131">Cell cycle</keyword>
<keyword id="KW-0132">Cell division</keyword>
<keyword id="KW-0175">Coiled coil</keyword>
<keyword id="KW-0963">Cytoplasm</keyword>
<keyword id="KW-0206">Cytoskeleton</keyword>
<keyword id="KW-0493">Microtubule</keyword>
<keyword id="KW-0498">Mitosis</keyword>
<keyword id="KW-0539">Nucleus</keyword>
<keyword id="KW-0597">Phosphoprotein</keyword>
<keyword id="KW-1185">Reference proteome</keyword>
<keyword id="KW-0833">Ubl conjugation pathway</keyword>
<protein>
    <recommendedName>
        <fullName evidence="6">BRISC complex subunit abraxas 2</fullName>
    </recommendedName>
</protein>
<dbReference type="EMBL" id="BC067636">
    <property type="protein sequence ID" value="AAH67636.1"/>
    <property type="molecule type" value="mRNA"/>
</dbReference>
<dbReference type="RefSeq" id="NP_998460.1">
    <property type="nucleotide sequence ID" value="NM_213295.1"/>
</dbReference>
<dbReference type="RefSeq" id="XP_009291404.1">
    <molecule id="A0A8M3AJY3-1"/>
    <property type="nucleotide sequence ID" value="XM_009293129.4"/>
</dbReference>
<dbReference type="RefSeq" id="XP_068070480.1">
    <molecule id="A0A8M3AJY3-1"/>
    <property type="nucleotide sequence ID" value="XM_068214379.1"/>
</dbReference>
<dbReference type="SMR" id="A0A8M3AJY3"/>
<dbReference type="GeneID" id="406584"/>
<dbReference type="KEGG" id="dre:406584"/>
<dbReference type="AGR" id="ZFIN:ZDB-GENE-040426-2491"/>
<dbReference type="CTD" id="23172"/>
<dbReference type="ZFIN" id="ZDB-GENE-040426-2491">
    <property type="gene designation" value="abraxas2"/>
</dbReference>
<dbReference type="OrthoDB" id="6358435at2759"/>
<dbReference type="TreeFam" id="TF331751"/>
<dbReference type="PRO" id="PR:A0A8M3AJY3"/>
<dbReference type="Proteomes" id="UP000000437">
    <property type="component" value="Chromosome 17"/>
</dbReference>
<dbReference type="GO" id="GO:0005737">
    <property type="term" value="C:cytoplasm"/>
    <property type="evidence" value="ECO:0007669"/>
    <property type="project" value="UniProtKB-SubCell"/>
</dbReference>
<dbReference type="GO" id="GO:0005874">
    <property type="term" value="C:microtubule"/>
    <property type="evidence" value="ECO:0007669"/>
    <property type="project" value="UniProtKB-KW"/>
</dbReference>
<dbReference type="GO" id="GO:0005634">
    <property type="term" value="C:nucleus"/>
    <property type="evidence" value="ECO:0000318"/>
    <property type="project" value="GO_Central"/>
</dbReference>
<dbReference type="GO" id="GO:0000922">
    <property type="term" value="C:spindle pole"/>
    <property type="evidence" value="ECO:0007669"/>
    <property type="project" value="UniProtKB-SubCell"/>
</dbReference>
<dbReference type="GO" id="GO:0008017">
    <property type="term" value="F:microtubule binding"/>
    <property type="evidence" value="ECO:0000318"/>
    <property type="project" value="GO_Central"/>
</dbReference>
<dbReference type="GO" id="GO:0031593">
    <property type="term" value="F:polyubiquitin modification-dependent protein binding"/>
    <property type="evidence" value="ECO:0000318"/>
    <property type="project" value="GO_Central"/>
</dbReference>
<dbReference type="GO" id="GO:0008608">
    <property type="term" value="P:attachment of spindle microtubules to kinetochore"/>
    <property type="evidence" value="ECO:0000318"/>
    <property type="project" value="GO_Central"/>
</dbReference>
<dbReference type="GO" id="GO:0051301">
    <property type="term" value="P:cell division"/>
    <property type="evidence" value="ECO:0007669"/>
    <property type="project" value="UniProtKB-KW"/>
</dbReference>
<dbReference type="GO" id="GO:0090307">
    <property type="term" value="P:mitotic spindle assembly"/>
    <property type="evidence" value="ECO:0000318"/>
    <property type="project" value="GO_Central"/>
</dbReference>
<dbReference type="CDD" id="cd23524">
    <property type="entry name" value="Abraxas_2"/>
    <property type="match status" value="1"/>
</dbReference>
<dbReference type="InterPro" id="IPR023240">
    <property type="entry name" value="BRISC_Abraxas2"/>
</dbReference>
<dbReference type="InterPro" id="IPR023238">
    <property type="entry name" value="FAM175"/>
</dbReference>
<dbReference type="InterPro" id="IPR037518">
    <property type="entry name" value="MPN"/>
</dbReference>
<dbReference type="PANTHER" id="PTHR31728">
    <property type="entry name" value="ABRAXAS FAMILY MEMBER"/>
    <property type="match status" value="1"/>
</dbReference>
<dbReference type="PANTHER" id="PTHR31728:SF1">
    <property type="entry name" value="BRISC COMPLEX SUBUNIT ABRAXAS 2"/>
    <property type="match status" value="1"/>
</dbReference>
<dbReference type="Pfam" id="PF21125">
    <property type="entry name" value="MPN_2A_DUB_like"/>
    <property type="match status" value="1"/>
</dbReference>
<dbReference type="PRINTS" id="PR02053">
    <property type="entry name" value="BRISCABRO1"/>
</dbReference>
<dbReference type="PRINTS" id="PR02051">
    <property type="entry name" value="PROTEINF175"/>
</dbReference>
<dbReference type="PROSITE" id="PS50249">
    <property type="entry name" value="MPN"/>
    <property type="match status" value="1"/>
</dbReference>
<organism evidence="8">
    <name type="scientific">Danio rerio</name>
    <name type="common">Zebrafish</name>
    <name type="synonym">Brachydanio rerio</name>
    <dbReference type="NCBI Taxonomy" id="7955"/>
    <lineage>
        <taxon>Eukaryota</taxon>
        <taxon>Metazoa</taxon>
        <taxon>Chordata</taxon>
        <taxon>Craniata</taxon>
        <taxon>Vertebrata</taxon>
        <taxon>Euteleostomi</taxon>
        <taxon>Actinopterygii</taxon>
        <taxon>Neopterygii</taxon>
        <taxon>Teleostei</taxon>
        <taxon>Ostariophysi</taxon>
        <taxon>Cypriniformes</taxon>
        <taxon>Danionidae</taxon>
        <taxon>Danioninae</taxon>
        <taxon>Danio</taxon>
    </lineage>
</organism>
<feature type="chain" id="PRO_0000458258" description="BRISC complex subunit abraxas 2">
    <location>
        <begin position="1"/>
        <end position="416"/>
    </location>
</feature>
<feature type="domain" description="MPN" evidence="1 3">
    <location>
        <begin position="3"/>
        <end position="149"/>
    </location>
</feature>
<feature type="region of interest" description="Important for interaction with brcc3 and other subunits of the BRISC complex" evidence="1">
    <location>
        <begin position="221"/>
        <end position="242"/>
    </location>
</feature>
<feature type="region of interest" description="Disordered" evidence="4">
    <location>
        <begin position="254"/>
        <end position="416"/>
    </location>
</feature>
<feature type="coiled-coil region" evidence="2">
    <location>
        <begin position="228"/>
        <end position="262"/>
    </location>
</feature>
<feature type="compositionally biased region" description="Basic and acidic residues" evidence="4">
    <location>
        <begin position="254"/>
        <end position="272"/>
    </location>
</feature>
<feature type="compositionally biased region" description="Low complexity" evidence="4">
    <location>
        <begin position="273"/>
        <end position="286"/>
    </location>
</feature>
<feature type="compositionally biased region" description="Low complexity" evidence="4">
    <location>
        <begin position="338"/>
        <end position="355"/>
    </location>
</feature>
<feature type="compositionally biased region" description="Acidic residues" evidence="4">
    <location>
        <begin position="363"/>
        <end position="378"/>
    </location>
</feature>
<feature type="modified residue" description="Phosphoserine" evidence="1">
    <location>
        <position position="377"/>
    </location>
</feature>
<feature type="splice variant" id="VSP_061938" description="In isoform 2." evidence="6">
    <location>
        <begin position="1"/>
        <end position="104"/>
    </location>
</feature>
<feature type="sequence conflict" description="In Ref. 2; AAH67636." evidence="6" ref="2">
    <original>NR</original>
    <variation>K</variation>
    <location>
        <begin position="153"/>
        <end position="154"/>
    </location>
</feature>
<proteinExistence type="evidence at protein level"/>
<sequence>MAASISGYTFSSVCYHSANSNSDHEGFLLGEVRQEETLNISDSHIGSSEFLSVIEVHNHEPCAQLFSFYDYAGNINEENLDRILKDRRKNVIGWYRFRRNTQQQMSFREQVIHKQLTNILGIPDLVFLLFSFISTANSSTHALEYVLFRPNRNRYNQRISLSIPNLGNTSQQEYKVSSVPNTSKNYASVIKEHGTEFFDKDGVMKDIRAIFQVYSALQERVQAVCGEVDQSERVREKIQEEVNKLKEEIALRKRNSAEEERRIQEAAAETHPDSSTLPESSHSSLTGVVLSGPTAEPSLERPVNSSSPPIYSTALPPDSPSAILLPRPQAVGSPGHPSPSLGLGNGDGSSSDSLNRQATGQEDHEEDDDDDEDEDSSEYENLVSEQLQPTSLPDAVALGRPATLWPDGDAHSPPGS</sequence>
<comment type="function">
    <text evidence="1">Component of the BRISC complex, a multiprotein complex that specifically cleaves 'Lys-63'-linked polyubiquitin, leaving the last ubiquitin chain attached to its substrates (By similarity). May act as a central scaffold protein that assembles the various components of the BRISC complex and retains them in the cytoplasm (By similarity).</text>
</comment>
<comment type="subunit">
    <text evidence="5">Component of the BRISC complex, at least composed of abraxas2, brcc3, babam1 and babam2 (PubMed:26344097). Interacts with brcc3; the interaction is direct and may form a heterotetramer (PubMed:26344097).</text>
</comment>
<comment type="subcellular location">
    <subcellularLocation>
        <location evidence="1">Cytoplasm</location>
    </subcellularLocation>
    <subcellularLocation>
        <location evidence="1">Nucleus</location>
    </subcellularLocation>
    <subcellularLocation>
        <location evidence="1">Cytoplasm</location>
        <location evidence="1">Cytoskeleton</location>
        <location evidence="1">Spindle pole</location>
    </subcellularLocation>
    <subcellularLocation>
        <location evidence="1">Cytoplasm</location>
        <location evidence="1">Cytoskeleton</location>
    </subcellularLocation>
</comment>
<comment type="alternative products">
    <event type="alternative splicing"/>
    <isoform>
        <id>A0A8M3AJY3-1</id>
        <name evidence="1">1</name>
        <sequence type="displayed"/>
    </isoform>
    <isoform>
        <id>A0A8M3AJY3-2</id>
        <name evidence="1">2</name>
        <sequence type="described" ref="VSP_061938"/>
    </isoform>
</comment>
<comment type="similarity">
    <text evidence="6">Belongs to the FAM175 family. Abro1 subfamily.</text>
</comment>
<accession>A0A8M3AJY3</accession>
<accession>A0A8M3AUE4</accession>
<accession>Q6NWD2</accession>